<sequence length="81" mass="9349">MKKDIHPEYKKVVFLDTSTNFKFLSGSTKGSDETIEWEDGNTYPLIKVEISSDSHPFYTGKQKADKVGGRVDRFKKKYNLQ</sequence>
<keyword id="KW-1185">Reference proteome</keyword>
<keyword id="KW-0687">Ribonucleoprotein</keyword>
<keyword id="KW-0689">Ribosomal protein</keyword>
<protein>
    <recommendedName>
        <fullName evidence="1">Large ribosomal subunit protein bL31B</fullName>
    </recommendedName>
    <alternativeName>
        <fullName evidence="2">50S ribosomal protein L31 type B</fullName>
    </alternativeName>
</protein>
<gene>
    <name evidence="1" type="primary">rpmE2</name>
    <name type="synonym">rpmE</name>
    <name type="ordered locus">OB3000</name>
</gene>
<reference key="1">
    <citation type="journal article" date="2002" name="Nucleic Acids Res.">
        <title>Genome sequence of Oceanobacillus iheyensis isolated from the Iheya Ridge and its unexpected adaptive capabilities to extreme environments.</title>
        <authorList>
            <person name="Takami H."/>
            <person name="Takaki Y."/>
            <person name="Uchiyama I."/>
        </authorList>
    </citation>
    <scope>NUCLEOTIDE SEQUENCE [LARGE SCALE GENOMIC DNA]</scope>
    <source>
        <strain>DSM 14371 / CIP 107618 / JCM 11309 / KCTC 3954 / HTE831</strain>
    </source>
</reference>
<organism>
    <name type="scientific">Oceanobacillus iheyensis (strain DSM 14371 / CIP 107618 / JCM 11309 / KCTC 3954 / HTE831)</name>
    <dbReference type="NCBI Taxonomy" id="221109"/>
    <lineage>
        <taxon>Bacteria</taxon>
        <taxon>Bacillati</taxon>
        <taxon>Bacillota</taxon>
        <taxon>Bacilli</taxon>
        <taxon>Bacillales</taxon>
        <taxon>Bacillaceae</taxon>
        <taxon>Oceanobacillus</taxon>
    </lineage>
</organism>
<evidence type="ECO:0000255" key="1">
    <source>
        <dbReference type="HAMAP-Rule" id="MF_00502"/>
    </source>
</evidence>
<evidence type="ECO:0000305" key="2"/>
<accession>Q8EM58</accession>
<proteinExistence type="inferred from homology"/>
<feature type="chain" id="PRO_0000173242" description="Large ribosomal subunit protein bL31B">
    <location>
        <begin position="1"/>
        <end position="81"/>
    </location>
</feature>
<name>RL31B_OCEIH</name>
<dbReference type="EMBL" id="BA000028">
    <property type="protein sequence ID" value="BAC14956.1"/>
    <property type="molecule type" value="Genomic_DNA"/>
</dbReference>
<dbReference type="RefSeq" id="WP_011067396.1">
    <property type="nucleotide sequence ID" value="NC_004193.1"/>
</dbReference>
<dbReference type="SMR" id="Q8EM58"/>
<dbReference type="STRING" id="221109.gene:10735252"/>
<dbReference type="KEGG" id="oih:OB3000"/>
<dbReference type="eggNOG" id="COG0254">
    <property type="taxonomic scope" value="Bacteria"/>
</dbReference>
<dbReference type="HOGENOM" id="CLU_114306_2_2_9"/>
<dbReference type="OrthoDB" id="9803251at2"/>
<dbReference type="PhylomeDB" id="Q8EM58"/>
<dbReference type="Proteomes" id="UP000000822">
    <property type="component" value="Chromosome"/>
</dbReference>
<dbReference type="GO" id="GO:1990904">
    <property type="term" value="C:ribonucleoprotein complex"/>
    <property type="evidence" value="ECO:0007669"/>
    <property type="project" value="UniProtKB-KW"/>
</dbReference>
<dbReference type="GO" id="GO:0005840">
    <property type="term" value="C:ribosome"/>
    <property type="evidence" value="ECO:0007669"/>
    <property type="project" value="UniProtKB-KW"/>
</dbReference>
<dbReference type="GO" id="GO:0003735">
    <property type="term" value="F:structural constituent of ribosome"/>
    <property type="evidence" value="ECO:0007669"/>
    <property type="project" value="InterPro"/>
</dbReference>
<dbReference type="GO" id="GO:0006412">
    <property type="term" value="P:translation"/>
    <property type="evidence" value="ECO:0007669"/>
    <property type="project" value="UniProtKB-UniRule"/>
</dbReference>
<dbReference type="Gene3D" id="4.10.830.30">
    <property type="entry name" value="Ribosomal protein L31"/>
    <property type="match status" value="1"/>
</dbReference>
<dbReference type="HAMAP" id="MF_00502">
    <property type="entry name" value="Ribosomal_bL31_2"/>
    <property type="match status" value="1"/>
</dbReference>
<dbReference type="InterPro" id="IPR034704">
    <property type="entry name" value="Ribosomal_bL28/bL31-like_sf"/>
</dbReference>
<dbReference type="InterPro" id="IPR002150">
    <property type="entry name" value="Ribosomal_bL31"/>
</dbReference>
<dbReference type="InterPro" id="IPR027493">
    <property type="entry name" value="Ribosomal_bL31_B"/>
</dbReference>
<dbReference type="InterPro" id="IPR042105">
    <property type="entry name" value="Ribosomal_bL31_sf"/>
</dbReference>
<dbReference type="NCBIfam" id="TIGR00105">
    <property type="entry name" value="L31"/>
    <property type="match status" value="1"/>
</dbReference>
<dbReference type="NCBIfam" id="NF002462">
    <property type="entry name" value="PRK01678.1"/>
    <property type="match status" value="1"/>
</dbReference>
<dbReference type="PANTHER" id="PTHR33280">
    <property type="entry name" value="50S RIBOSOMAL PROTEIN L31, CHLOROPLASTIC"/>
    <property type="match status" value="1"/>
</dbReference>
<dbReference type="PANTHER" id="PTHR33280:SF1">
    <property type="entry name" value="LARGE RIBOSOMAL SUBUNIT PROTEIN BL31C"/>
    <property type="match status" value="1"/>
</dbReference>
<dbReference type="Pfam" id="PF01197">
    <property type="entry name" value="Ribosomal_L31"/>
    <property type="match status" value="1"/>
</dbReference>
<dbReference type="PRINTS" id="PR01249">
    <property type="entry name" value="RIBOSOMALL31"/>
</dbReference>
<dbReference type="SUPFAM" id="SSF143800">
    <property type="entry name" value="L28p-like"/>
    <property type="match status" value="1"/>
</dbReference>
<dbReference type="PROSITE" id="PS01143">
    <property type="entry name" value="RIBOSOMAL_L31"/>
    <property type="match status" value="1"/>
</dbReference>
<comment type="subunit">
    <text evidence="1">Part of the 50S ribosomal subunit.</text>
</comment>
<comment type="similarity">
    <text evidence="1">Belongs to the bacterial ribosomal protein bL31 family. Type B subfamily.</text>
</comment>